<accession>C4ZQ57</accession>
<sequence>MTQFASPVLHSLLDTDAYKLHMQQAVFHHYYDVHVAAEFRCRGDDLLGIYADAIREQVQAMQHLRLQDDEYQWLSALPFFKADYLNWLREFRFNPEQVTVSNDNGKLDIRLSGPWREVILWEVPLLAVISEMVHRYRSPQADVAQALDTLESKLVDFSALTAGLDMSRFHLMDFGTRRRFSREVQETIVKRLQQESWFVGTSNYDLARRLSLTPMGTQAHEWFQAHQQISPDLANSQRAALAAWLEEYPDQLGIALTDCITMDAFLRDFGVEFASRYQGLRHDSGDPVEWGEKAIAHYEKLGIDPQSKTLVFSDNLDLRKAVELYRHFSSRVQLSFGIGTRLTCDIPQVKPLNIVIKLVECNGKPVAKLSDSPGKTICHDKAFVRALRKAFDLPHIKKAS</sequence>
<reference key="1">
    <citation type="journal article" date="2009" name="J. Bacteriol.">
        <title>Genomic sequencing reveals regulatory mutations and recombinational events in the widely used MC4100 lineage of Escherichia coli K-12.</title>
        <authorList>
            <person name="Ferenci T."/>
            <person name="Zhou Z."/>
            <person name="Betteridge T."/>
            <person name="Ren Y."/>
            <person name="Liu Y."/>
            <person name="Feng L."/>
            <person name="Reeves P.R."/>
            <person name="Wang L."/>
        </authorList>
    </citation>
    <scope>NUCLEOTIDE SEQUENCE [LARGE SCALE GENOMIC DNA]</scope>
    <source>
        <strain>K12 / MC4100 / BW2952</strain>
    </source>
</reference>
<organism>
    <name type="scientific">Escherichia coli (strain K12 / MC4100 / BW2952)</name>
    <dbReference type="NCBI Taxonomy" id="595496"/>
    <lineage>
        <taxon>Bacteria</taxon>
        <taxon>Pseudomonadati</taxon>
        <taxon>Pseudomonadota</taxon>
        <taxon>Gammaproteobacteria</taxon>
        <taxon>Enterobacterales</taxon>
        <taxon>Enterobacteriaceae</taxon>
        <taxon>Escherichia</taxon>
    </lineage>
</organism>
<dbReference type="EC" id="6.3.4.21" evidence="1"/>
<dbReference type="EMBL" id="CP001396">
    <property type="protein sequence ID" value="ACR63892.1"/>
    <property type="molecule type" value="Genomic_DNA"/>
</dbReference>
<dbReference type="RefSeq" id="WP_001307697.1">
    <property type="nucleotide sequence ID" value="NC_012759.1"/>
</dbReference>
<dbReference type="SMR" id="C4ZQ57"/>
<dbReference type="GeneID" id="75171005"/>
<dbReference type="KEGG" id="ebw:BWG_0783"/>
<dbReference type="HOGENOM" id="CLU_030991_1_0_6"/>
<dbReference type="UniPathway" id="UPA00253">
    <property type="reaction ID" value="UER00457"/>
</dbReference>
<dbReference type="GO" id="GO:0005829">
    <property type="term" value="C:cytosol"/>
    <property type="evidence" value="ECO:0007669"/>
    <property type="project" value="TreeGrafter"/>
</dbReference>
<dbReference type="GO" id="GO:0004516">
    <property type="term" value="F:nicotinate phosphoribosyltransferase activity"/>
    <property type="evidence" value="ECO:0007669"/>
    <property type="project" value="UniProtKB-UniRule"/>
</dbReference>
<dbReference type="GO" id="GO:0034355">
    <property type="term" value="P:NAD biosynthetic process via the salvage pathway"/>
    <property type="evidence" value="ECO:0007669"/>
    <property type="project" value="TreeGrafter"/>
</dbReference>
<dbReference type="CDD" id="cd01401">
    <property type="entry name" value="PncB_like"/>
    <property type="match status" value="1"/>
</dbReference>
<dbReference type="FunFam" id="3.20.140.10:FF:000001">
    <property type="entry name" value="Nicotinate phosphoribosyltransferase"/>
    <property type="match status" value="1"/>
</dbReference>
<dbReference type="Gene3D" id="3.20.140.10">
    <property type="entry name" value="nicotinate phosphoribosyltransferase"/>
    <property type="match status" value="1"/>
</dbReference>
<dbReference type="HAMAP" id="MF_00570">
    <property type="entry name" value="NAPRTase"/>
    <property type="match status" value="1"/>
</dbReference>
<dbReference type="InterPro" id="IPR041525">
    <property type="entry name" value="N/Namide_PRibTrfase"/>
</dbReference>
<dbReference type="InterPro" id="IPR040727">
    <property type="entry name" value="NAPRTase_N"/>
</dbReference>
<dbReference type="InterPro" id="IPR006406">
    <property type="entry name" value="Nic_PRibTrfase"/>
</dbReference>
<dbReference type="InterPro" id="IPR007229">
    <property type="entry name" value="Nic_PRibTrfase-Fam"/>
</dbReference>
<dbReference type="InterPro" id="IPR036068">
    <property type="entry name" value="Nicotinate_pribotase-like_C"/>
</dbReference>
<dbReference type="NCBIfam" id="TIGR01514">
    <property type="entry name" value="NAPRTase"/>
    <property type="match status" value="1"/>
</dbReference>
<dbReference type="NCBIfam" id="NF003704">
    <property type="entry name" value="PRK05321.1"/>
    <property type="match status" value="1"/>
</dbReference>
<dbReference type="PANTHER" id="PTHR11098">
    <property type="entry name" value="NICOTINATE PHOSPHORIBOSYLTRANSFERASE"/>
    <property type="match status" value="1"/>
</dbReference>
<dbReference type="PANTHER" id="PTHR11098:SF1">
    <property type="entry name" value="NICOTINATE PHOSPHORIBOSYLTRANSFERASE"/>
    <property type="match status" value="1"/>
</dbReference>
<dbReference type="Pfam" id="PF04095">
    <property type="entry name" value="NAPRTase"/>
    <property type="match status" value="1"/>
</dbReference>
<dbReference type="Pfam" id="PF17767">
    <property type="entry name" value="NAPRTase_N"/>
    <property type="match status" value="1"/>
</dbReference>
<dbReference type="PIRSF" id="PIRSF000484">
    <property type="entry name" value="NAPRT"/>
    <property type="match status" value="1"/>
</dbReference>
<dbReference type="SUPFAM" id="SSF51690">
    <property type="entry name" value="Nicotinate/Quinolinate PRTase C-terminal domain-like"/>
    <property type="match status" value="1"/>
</dbReference>
<dbReference type="SUPFAM" id="SSF54675">
    <property type="entry name" value="Nicotinate/Quinolinate PRTase N-terminal domain-like"/>
    <property type="match status" value="1"/>
</dbReference>
<evidence type="ECO:0000255" key="1">
    <source>
        <dbReference type="HAMAP-Rule" id="MF_00570"/>
    </source>
</evidence>
<name>PNCB_ECOBW</name>
<comment type="function">
    <text evidence="1">Catalyzes the synthesis of beta-nicotinate D-ribonucleotide from nicotinate and 5-phospho-D-ribose 1-phosphate at the expense of ATP.</text>
</comment>
<comment type="catalytic activity">
    <reaction evidence="1">
        <text>nicotinate + 5-phospho-alpha-D-ribose 1-diphosphate + ATP + H2O = nicotinate beta-D-ribonucleotide + ADP + phosphate + diphosphate</text>
        <dbReference type="Rhea" id="RHEA:36163"/>
        <dbReference type="ChEBI" id="CHEBI:15377"/>
        <dbReference type="ChEBI" id="CHEBI:30616"/>
        <dbReference type="ChEBI" id="CHEBI:32544"/>
        <dbReference type="ChEBI" id="CHEBI:33019"/>
        <dbReference type="ChEBI" id="CHEBI:43474"/>
        <dbReference type="ChEBI" id="CHEBI:57502"/>
        <dbReference type="ChEBI" id="CHEBI:58017"/>
        <dbReference type="ChEBI" id="CHEBI:456216"/>
        <dbReference type="EC" id="6.3.4.21"/>
    </reaction>
</comment>
<comment type="pathway">
    <text evidence="1">Cofactor biosynthesis; NAD(+) biosynthesis; nicotinate D-ribonucleotide from nicotinate: step 1/1.</text>
</comment>
<comment type="PTM">
    <text evidence="1">Transiently phosphorylated on a His residue during the reaction cycle. Phosphorylation strongly increases the affinity for substrates and increases the rate of nicotinate D-ribonucleotide production. Dephosphorylation regenerates the low-affinity form of the enzyme, leading to product release.</text>
</comment>
<comment type="similarity">
    <text evidence="1">Belongs to the NAPRTase family.</text>
</comment>
<gene>
    <name evidence="1" type="primary">pncB</name>
    <name type="ordered locus">BWG_0783</name>
</gene>
<protein>
    <recommendedName>
        <fullName evidence="1">Nicotinate phosphoribosyltransferase</fullName>
        <shortName evidence="1">NAPRTase</shortName>
        <ecNumber evidence="1">6.3.4.21</ecNumber>
    </recommendedName>
</protein>
<feature type="chain" id="PRO_1000212083" description="Nicotinate phosphoribosyltransferase">
    <location>
        <begin position="1"/>
        <end position="400"/>
    </location>
</feature>
<feature type="modified residue" description="Phosphohistidine; by autocatalysis" evidence="1">
    <location>
        <position position="220"/>
    </location>
</feature>
<keyword id="KW-0436">Ligase</keyword>
<keyword id="KW-0597">Phosphoprotein</keyword>
<keyword id="KW-0662">Pyridine nucleotide biosynthesis</keyword>
<proteinExistence type="inferred from homology"/>